<reference evidence="10" key="1">
    <citation type="journal article" date="1996" name="EMBO J.">
        <title>The tra-3 sex determination gene of Caenorhabditis elegans encodes a member of the calpain regulatory protease family.</title>
        <authorList>
            <person name="Barnes T.M."/>
            <person name="Hodgkin J."/>
        </authorList>
    </citation>
    <scope>NUCLEOTIDE SEQUENCE [GENOMIC DNA]</scope>
    <source>
        <strain evidence="10">Bristol N2</strain>
    </source>
</reference>
<reference evidence="11" key="2">
    <citation type="journal article" date="1998" name="Science">
        <title>Genome sequence of the nematode C. elegans: a platform for investigating biology.</title>
        <authorList>
            <consortium name="The C. elegans sequencing consortium"/>
        </authorList>
    </citation>
    <scope>NUCLEOTIDE SEQUENCE [LARGE SCALE GENOMIC DNA]</scope>
    <source>
        <strain evidence="11">Bristol N2</strain>
    </source>
</reference>
<reference key="3">
    <citation type="journal article" date="2000" name="Genes Dev.">
        <title>Proteolysis in Caenorhabditis elegans sex determination: cleavage of TRA-2A by TRA-3.</title>
        <authorList>
            <person name="Sokol S.B."/>
            <person name="Kuwabara P.E."/>
        </authorList>
    </citation>
    <scope>FUNCTION</scope>
    <scope>CATALYTIC ACTIVITY</scope>
    <scope>MUTAGENESIS OF CYS-83</scope>
</reference>
<reference key="4">
    <citation type="journal article" date="2002" name="Nature">
        <title>Specific aspartyl and calpain proteases are required for neurodegeneration in C. elegans.</title>
        <authorList>
            <person name="Syntichaki P."/>
            <person name="Xu K."/>
            <person name="Driscoll M."/>
            <person name="Tavernarakis N."/>
        </authorList>
    </citation>
    <scope>FUNCTION</scope>
    <scope>DISRUPTION PHENOTYPE</scope>
</reference>
<reference key="5">
    <citation type="journal article" date="2012" name="PLoS Genet.">
        <title>The atypical calpains: evolutionary analyses and roles in Caenorhabditis elegans cellular degeneration.</title>
        <authorList>
            <person name="Joyce P.I."/>
            <person name="Satija R."/>
            <person name="Chen M."/>
            <person name="Kuwabara P.E."/>
        </authorList>
    </citation>
    <scope>TISSUE SPECIFICITY</scope>
</reference>
<reference key="6">
    <citation type="journal article" date="2016" name="PLoS Pathog.">
        <title>Bacillus thuringiensis Crystal Protein Cry6Aa Triggers Caenorhabditis elegans Necrosis Pathway Mediated by Aspartic Protease (ASP-1).</title>
        <authorList>
            <person name="Zhang F."/>
            <person name="Peng D."/>
            <person name="Cheng C."/>
            <person name="Zhou W."/>
            <person name="Ju S."/>
            <person name="Wan D."/>
            <person name="Yu Z."/>
            <person name="Shi J."/>
            <person name="Deng Y."/>
            <person name="Wang F."/>
            <person name="Ye X."/>
            <person name="Hu Z."/>
            <person name="Lin J."/>
            <person name="Ruan L."/>
            <person name="Sun M."/>
        </authorList>
    </citation>
    <scope>FUNCTION</scope>
    <scope>MUTAGENESIS OF 126-TRP--LEU-648</scope>
</reference>
<sequence length="648" mass="73614">MTRSEKTRHFGNQNYEKLRKICIKKKQPFVDTLFPPTNQSLFLEQRQSSDIVWKRPGELHPDPHLFVEGASPNDVTQGILGNCWFVSACSALTHNFKLLAQVIPDADDQEWSTKHAYAGIFRFRFWRFGKWVEVVIDDLLPTRDGKLLFARSKTPNEFWSALLEKAFAKLYGCYENLVGGHLSDALQDVSGGVAETLHVRKFLKDDPNDTELKLFNDLKTAFDKGALVVAAIAARTKEEIEESLDCGLVKGHAYAVSAVCTIDVTNPNERSFTSFIMGSKRKQNLIRLQNPWGEKEWNGAWSDDSPEWQNVSASQLSTMGVQPANSDSDDGDFWMPWESFVHYFTDISLCQLFNTSVFSFSRSYDEQIVFSEWTTNGKKSGAPDDRAGGCHNFKATFCNNPQYIFDIPSPNCSVMFALIQNDPSEGLKKREPFVTIGMHVMKVENNRQYRVHTAMHPIAISDYASGRSVYLHLQSLPRGRYLLIPTTFAPKEQTLFMLRVYSDEHIHFSPLTKHAPKLGLLKCKSAQSVTRLTIHGVDFNSASTGTHNVYAILKDSRKSFRTKTLSGVKSIQWDEQFLFHKSKNRQQYKIEVWEDRKMARDHLLAQSVIIALIDNENRDTTLQLTDPRGTVIGTVSVTVSAFDDPMYL</sequence>
<feature type="chain" id="PRO_0000207716" description="Calpain-5">
    <location>
        <begin position="1"/>
        <end position="648"/>
    </location>
</feature>
<feature type="domain" description="Calpain catalytic" evidence="4">
    <location>
        <begin position="28"/>
        <end position="353"/>
    </location>
</feature>
<feature type="domain" description="C2" evidence="3">
    <location>
        <begin position="502"/>
        <end position="625"/>
    </location>
</feature>
<feature type="region of interest" description="Domain III">
    <location>
        <begin position="354"/>
        <end position="509"/>
    </location>
</feature>
<feature type="active site" evidence="5">
    <location>
        <position position="83"/>
    </location>
</feature>
<feature type="active site" evidence="2">
    <location>
        <position position="252"/>
    </location>
</feature>
<feature type="active site" evidence="2">
    <location>
        <position position="290"/>
    </location>
</feature>
<feature type="mutagenesis site" description="Loss of tra-2 (isoform a) cleavage. Prevents female sexual development." evidence="5">
    <original>C</original>
    <variation>S</variation>
    <location>
        <position position="83"/>
    </location>
</feature>
<feature type="mutagenesis site" description="Reduces susceptibility to B.thuringiensis endotoxin Cry6Aa." evidence="8">
    <location>
        <begin position="126"/>
        <end position="648"/>
    </location>
</feature>
<keyword id="KW-0068">Autocatalytic cleavage</keyword>
<keyword id="KW-0106">Calcium</keyword>
<keyword id="KW-0221">Differentiation</keyword>
<keyword id="KW-0378">Hydrolase</keyword>
<keyword id="KW-1210">Necrosis</keyword>
<keyword id="KW-0645">Protease</keyword>
<keyword id="KW-1185">Reference proteome</keyword>
<keyword id="KW-0726">Sexual differentiation</keyword>
<keyword id="KW-0788">Thiol protease</keyword>
<organism>
    <name type="scientific">Caenorhabditis elegans</name>
    <dbReference type="NCBI Taxonomy" id="6239"/>
    <lineage>
        <taxon>Eukaryota</taxon>
        <taxon>Metazoa</taxon>
        <taxon>Ecdysozoa</taxon>
        <taxon>Nematoda</taxon>
        <taxon>Chromadorea</taxon>
        <taxon>Rhabditida</taxon>
        <taxon>Rhabditina</taxon>
        <taxon>Rhabditomorpha</taxon>
        <taxon>Rhabditoidea</taxon>
        <taxon>Rhabditidae</taxon>
        <taxon>Peloderinae</taxon>
        <taxon>Caenorhabditis</taxon>
    </lineage>
</organism>
<dbReference type="EC" id="3.4.22.-" evidence="5"/>
<dbReference type="EMBL" id="AH005324">
    <property type="protein sequence ID" value="AAB60256.1"/>
    <property type="molecule type" value="Genomic_DNA"/>
</dbReference>
<dbReference type="EMBL" id="U12516">
    <property type="protein sequence ID" value="AAB60256.1"/>
    <property type="status" value="JOINED"/>
    <property type="molecule type" value="Genomic_DNA"/>
</dbReference>
<dbReference type="EMBL" id="U12920">
    <property type="protein sequence ID" value="AAB60256.1"/>
    <property type="status" value="JOINED"/>
    <property type="molecule type" value="Genomic_DNA"/>
</dbReference>
<dbReference type="EMBL" id="BX284604">
    <property type="protein sequence ID" value="CAB05248.1"/>
    <property type="molecule type" value="Genomic_DNA"/>
</dbReference>
<dbReference type="PIR" id="S71885">
    <property type="entry name" value="S71885"/>
</dbReference>
<dbReference type="RefSeq" id="NP_502751.1">
    <property type="nucleotide sequence ID" value="NM_070350.7"/>
</dbReference>
<dbReference type="SMR" id="Q22036"/>
<dbReference type="BioGRID" id="43468">
    <property type="interactions" value="1"/>
</dbReference>
<dbReference type="FunCoup" id="Q22036">
    <property type="interactions" value="218"/>
</dbReference>
<dbReference type="STRING" id="6239.LLC1.1a.1"/>
<dbReference type="MEROPS" id="C02.009"/>
<dbReference type="iPTMnet" id="Q22036"/>
<dbReference type="PaxDb" id="6239-LLC1.1"/>
<dbReference type="PeptideAtlas" id="Q22036"/>
<dbReference type="EnsemblMetazoa" id="LLC1.1a.1">
    <property type="protein sequence ID" value="LLC1.1a.1"/>
    <property type="gene ID" value="WBGene00006606"/>
</dbReference>
<dbReference type="GeneID" id="178385"/>
<dbReference type="KEGG" id="cel:CELE_LLC1.1"/>
<dbReference type="UCSC" id="LLC1.1">
    <property type="organism name" value="c. elegans"/>
</dbReference>
<dbReference type="AGR" id="WB:WBGene00006606"/>
<dbReference type="CTD" id="178385"/>
<dbReference type="WormBase" id="LLC1.1a">
    <property type="protein sequence ID" value="CE16260"/>
    <property type="gene ID" value="WBGene00006606"/>
    <property type="gene designation" value="tra-3"/>
</dbReference>
<dbReference type="eggNOG" id="KOG0045">
    <property type="taxonomic scope" value="Eukaryota"/>
</dbReference>
<dbReference type="GeneTree" id="ENSGT00940000172628"/>
<dbReference type="HOGENOM" id="CLU_010982_3_2_1"/>
<dbReference type="InParanoid" id="Q22036"/>
<dbReference type="OMA" id="WKFFGEW"/>
<dbReference type="OrthoDB" id="424753at2759"/>
<dbReference type="PhylomeDB" id="Q22036"/>
<dbReference type="PRO" id="PR:Q22036"/>
<dbReference type="Proteomes" id="UP000001940">
    <property type="component" value="Chromosome IV"/>
</dbReference>
<dbReference type="Bgee" id="WBGene00006606">
    <property type="expression patterns" value="Expressed in embryo and 4 other cell types or tissues"/>
</dbReference>
<dbReference type="GO" id="GO:0005737">
    <property type="term" value="C:cytoplasm"/>
    <property type="evidence" value="ECO:0000318"/>
    <property type="project" value="GO_Central"/>
</dbReference>
<dbReference type="GO" id="GO:0016020">
    <property type="term" value="C:membrane"/>
    <property type="evidence" value="ECO:0000304"/>
    <property type="project" value="UniProtKB"/>
</dbReference>
<dbReference type="GO" id="GO:0004198">
    <property type="term" value="F:calcium-dependent cysteine-type endopeptidase activity"/>
    <property type="evidence" value="ECO:0000250"/>
    <property type="project" value="WormBase"/>
</dbReference>
<dbReference type="GO" id="GO:0004197">
    <property type="term" value="F:cysteine-type endopeptidase activity"/>
    <property type="evidence" value="ECO:0000314"/>
    <property type="project" value="WormBase"/>
</dbReference>
<dbReference type="GO" id="GO:0030154">
    <property type="term" value="P:cell differentiation"/>
    <property type="evidence" value="ECO:0007669"/>
    <property type="project" value="UniProtKB-KW"/>
</dbReference>
<dbReference type="GO" id="GO:0019099">
    <property type="term" value="P:female germ-line sex determination"/>
    <property type="evidence" value="ECO:0000315"/>
    <property type="project" value="UniProtKB"/>
</dbReference>
<dbReference type="GO" id="GO:0042004">
    <property type="term" value="P:feminization of hermaphrodite soma"/>
    <property type="evidence" value="ECO:0000315"/>
    <property type="project" value="UniProtKB"/>
</dbReference>
<dbReference type="GO" id="GO:0042001">
    <property type="term" value="P:hermaphrodite somatic sex determination"/>
    <property type="evidence" value="ECO:0000315"/>
    <property type="project" value="WormBase"/>
</dbReference>
<dbReference type="GO" id="GO:0031293">
    <property type="term" value="P:membrane protein intracellular domain proteolysis"/>
    <property type="evidence" value="ECO:0000314"/>
    <property type="project" value="WormBase"/>
</dbReference>
<dbReference type="GO" id="GO:0012501">
    <property type="term" value="P:programmed cell death"/>
    <property type="evidence" value="ECO:0007669"/>
    <property type="project" value="UniProtKB-KW"/>
</dbReference>
<dbReference type="GO" id="GO:0016540">
    <property type="term" value="P:protein autoprocessing"/>
    <property type="evidence" value="ECO:0000314"/>
    <property type="project" value="WormBase"/>
</dbReference>
<dbReference type="GO" id="GO:0006508">
    <property type="term" value="P:proteolysis"/>
    <property type="evidence" value="ECO:0000314"/>
    <property type="project" value="UniProtKB"/>
</dbReference>
<dbReference type="GO" id="GO:0007548">
    <property type="term" value="P:sex differentiation"/>
    <property type="evidence" value="ECO:0007669"/>
    <property type="project" value="UniProtKB-KW"/>
</dbReference>
<dbReference type="CDD" id="cd04046">
    <property type="entry name" value="C2_Calpain"/>
    <property type="match status" value="1"/>
</dbReference>
<dbReference type="CDD" id="cd00214">
    <property type="entry name" value="Calpain_III"/>
    <property type="match status" value="1"/>
</dbReference>
<dbReference type="CDD" id="cd00044">
    <property type="entry name" value="CysPc"/>
    <property type="match status" value="1"/>
</dbReference>
<dbReference type="FunFam" id="2.60.120.380:FF:000020">
    <property type="entry name" value="Protein CBR-TRA-3"/>
    <property type="match status" value="1"/>
</dbReference>
<dbReference type="FunFam" id="3.90.70.10:FF:000209">
    <property type="entry name" value="Protein CBR-TRA-3"/>
    <property type="match status" value="1"/>
</dbReference>
<dbReference type="Gene3D" id="2.60.120.380">
    <property type="match status" value="1"/>
</dbReference>
<dbReference type="Gene3D" id="2.60.40.150">
    <property type="entry name" value="C2 domain"/>
    <property type="match status" value="1"/>
</dbReference>
<dbReference type="Gene3D" id="3.90.70.10">
    <property type="entry name" value="Cysteine proteinases"/>
    <property type="match status" value="1"/>
</dbReference>
<dbReference type="InterPro" id="IPR033884">
    <property type="entry name" value="C2_Calpain"/>
</dbReference>
<dbReference type="InterPro" id="IPR000008">
    <property type="entry name" value="C2_dom"/>
</dbReference>
<dbReference type="InterPro" id="IPR035892">
    <property type="entry name" value="C2_domain_sf"/>
</dbReference>
<dbReference type="InterPro" id="IPR033883">
    <property type="entry name" value="C2_III"/>
</dbReference>
<dbReference type="InterPro" id="IPR022684">
    <property type="entry name" value="Calpain_cysteine_protease"/>
</dbReference>
<dbReference type="InterPro" id="IPR022682">
    <property type="entry name" value="Calpain_domain_III"/>
</dbReference>
<dbReference type="InterPro" id="IPR022683">
    <property type="entry name" value="Calpain_III"/>
</dbReference>
<dbReference type="InterPro" id="IPR036213">
    <property type="entry name" value="Calpain_III_sf"/>
</dbReference>
<dbReference type="InterPro" id="IPR038765">
    <property type="entry name" value="Papain-like_cys_pep_sf"/>
</dbReference>
<dbReference type="InterPro" id="IPR000169">
    <property type="entry name" value="Pept_cys_AS"/>
</dbReference>
<dbReference type="InterPro" id="IPR001300">
    <property type="entry name" value="Peptidase_C2_calpain_cat"/>
</dbReference>
<dbReference type="PANTHER" id="PTHR10183">
    <property type="entry name" value="CALPAIN"/>
    <property type="match status" value="1"/>
</dbReference>
<dbReference type="PANTHER" id="PTHR10183:SF379">
    <property type="entry name" value="CALPAIN-5"/>
    <property type="match status" value="1"/>
</dbReference>
<dbReference type="Pfam" id="PF00168">
    <property type="entry name" value="C2"/>
    <property type="match status" value="1"/>
</dbReference>
<dbReference type="Pfam" id="PF01067">
    <property type="entry name" value="Calpain_III"/>
    <property type="match status" value="1"/>
</dbReference>
<dbReference type="Pfam" id="PF00648">
    <property type="entry name" value="Peptidase_C2"/>
    <property type="match status" value="1"/>
</dbReference>
<dbReference type="PRINTS" id="PR00704">
    <property type="entry name" value="CALPAIN"/>
</dbReference>
<dbReference type="SMART" id="SM00239">
    <property type="entry name" value="C2"/>
    <property type="match status" value="1"/>
</dbReference>
<dbReference type="SMART" id="SM00720">
    <property type="entry name" value="calpain_III"/>
    <property type="match status" value="1"/>
</dbReference>
<dbReference type="SMART" id="SM00230">
    <property type="entry name" value="CysPc"/>
    <property type="match status" value="1"/>
</dbReference>
<dbReference type="SUPFAM" id="SSF49562">
    <property type="entry name" value="C2 domain (Calcium/lipid-binding domain, CaLB)"/>
    <property type="match status" value="1"/>
</dbReference>
<dbReference type="SUPFAM" id="SSF49758">
    <property type="entry name" value="Calpain large subunit, middle domain (domain III)"/>
    <property type="match status" value="1"/>
</dbReference>
<dbReference type="SUPFAM" id="SSF54001">
    <property type="entry name" value="Cysteine proteinases"/>
    <property type="match status" value="1"/>
</dbReference>
<dbReference type="PROSITE" id="PS50004">
    <property type="entry name" value="C2"/>
    <property type="match status" value="1"/>
</dbReference>
<dbReference type="PROSITE" id="PS50203">
    <property type="entry name" value="CALPAIN_CAT"/>
    <property type="match status" value="1"/>
</dbReference>
<dbReference type="PROSITE" id="PS00139">
    <property type="entry name" value="THIOL_PROTEASE_CYS"/>
    <property type="match status" value="1"/>
</dbReference>
<comment type="function">
    <text evidence="5 6 8">Required for the correct female sexual development of the soma and germline in hermaphrodite animals, while being fully dispensable in males. Has calcium-dependent proteolytic activity and is involved in the cleavage of tra-2, for which it acts as a potentiator. Capable of calcium-dependent autolysis (PubMed:10783162). Part of the necrosis cell death pathway (PubMed:12410314). Required for necrosis of intestinal cells induced by B.thuringiensis endotoxin Cry6Aa (PubMed:26795495).</text>
</comment>
<comment type="cofactor">
    <cofactor evidence="1">
        <name>Ca(2+)</name>
        <dbReference type="ChEBI" id="CHEBI:29108"/>
    </cofactor>
    <text evidence="1">Binds 3 Ca(2+) ions.</text>
</comment>
<comment type="tissue specificity">
    <text evidence="7">Expressed in neuronal, but not in GABA-ergic neurons, intestinal, hypodermal and excretory tissues.</text>
</comment>
<comment type="domain">
    <text>The calpain catalytic domain is essential for in vivo function to promote female sexual development.</text>
</comment>
<comment type="domain">
    <text>The C2 domain associated with the domain III is primarily responsible for calcium binding.</text>
</comment>
<comment type="disruption phenotype">
    <text evidence="6">RNAi-mediated knockdown prevents neuronal degeneration in a mec-4(u231), deg-1(u38) or gsa-1 gain-of-function mutant background.</text>
</comment>
<comment type="similarity">
    <text evidence="9">Belongs to the peptidase C2 family.</text>
</comment>
<gene>
    <name evidence="12" type="primary">tra-3</name>
    <name evidence="12" type="synonym">clp-5</name>
    <name evidence="12" type="ORF">LLC1.1</name>
</gene>
<accession>Q22036</accession>
<protein>
    <recommendedName>
        <fullName>Calpain-5</fullName>
        <ecNumber evidence="5">3.4.22.-</ecNumber>
    </recommendedName>
    <alternativeName>
        <fullName>Sex-determining transformer protein 3</fullName>
    </alternativeName>
</protein>
<evidence type="ECO:0000250" key="1"/>
<evidence type="ECO:0000250" key="2">
    <source>
        <dbReference type="UniProtKB" id="Q07009"/>
    </source>
</evidence>
<evidence type="ECO:0000255" key="3">
    <source>
        <dbReference type="PROSITE-ProRule" id="PRU00041"/>
    </source>
</evidence>
<evidence type="ECO:0000255" key="4">
    <source>
        <dbReference type="PROSITE-ProRule" id="PRU00239"/>
    </source>
</evidence>
<evidence type="ECO:0000269" key="5">
    <source>
    </source>
</evidence>
<evidence type="ECO:0000269" key="6">
    <source>
    </source>
</evidence>
<evidence type="ECO:0000269" key="7">
    <source>
    </source>
</evidence>
<evidence type="ECO:0000269" key="8">
    <source>
    </source>
</evidence>
<evidence type="ECO:0000305" key="9"/>
<evidence type="ECO:0000312" key="10">
    <source>
        <dbReference type="EMBL" id="AAB60256.1"/>
    </source>
</evidence>
<evidence type="ECO:0000312" key="11">
    <source>
        <dbReference type="EMBL" id="CAB05248.1"/>
    </source>
</evidence>
<evidence type="ECO:0000312" key="12">
    <source>
        <dbReference type="WormBase" id="LLC1.1a"/>
    </source>
</evidence>
<proteinExistence type="evidence at protein level"/>
<name>CAN5_CAEEL</name>